<keyword id="KW-1005">Bacterial flagellum biogenesis</keyword>
<keyword id="KW-0963">Cytoplasm</keyword>
<keyword id="KW-1185">Reference proteome</keyword>
<keyword id="KW-0678">Repressor</keyword>
<keyword id="KW-0694">RNA-binding</keyword>
<keyword id="KW-0810">Translation regulation</keyword>
<gene>
    <name evidence="1" type="primary">csrA</name>
    <name type="ordered locus">Lxx06470</name>
</gene>
<comment type="function">
    <text evidence="1">A translational regulator that binds mRNA to regulate translation initiation and/or mRNA stability. Usually binds in the 5'-UTR at or near the Shine-Dalgarno sequence preventing ribosome-binding, thus repressing translation. Its main target seems to be the major flagellin gene, while its function is anatagonized by FliW.</text>
</comment>
<comment type="subunit">
    <text evidence="1">Homodimer; the beta-strands of each monomer intercalate to form a hydrophobic core, while the alpha-helices form wings that extend away from the core.</text>
</comment>
<comment type="subcellular location">
    <subcellularLocation>
        <location evidence="1">Cytoplasm</location>
    </subcellularLocation>
</comment>
<comment type="similarity">
    <text evidence="1">Belongs to the CsrA/RsmA family.</text>
</comment>
<dbReference type="EMBL" id="AE016822">
    <property type="protein sequence ID" value="AAT88596.1"/>
    <property type="molecule type" value="Genomic_DNA"/>
</dbReference>
<dbReference type="RefSeq" id="WP_011185595.1">
    <property type="nucleotide sequence ID" value="NC_006087.1"/>
</dbReference>
<dbReference type="SMR" id="Q6AG99"/>
<dbReference type="STRING" id="281090.Lxx06470"/>
<dbReference type="KEGG" id="lxx:Lxx06470"/>
<dbReference type="eggNOG" id="COG1551">
    <property type="taxonomic scope" value="Bacteria"/>
</dbReference>
<dbReference type="HOGENOM" id="CLU_164837_1_2_11"/>
<dbReference type="Proteomes" id="UP000001306">
    <property type="component" value="Chromosome"/>
</dbReference>
<dbReference type="GO" id="GO:0005829">
    <property type="term" value="C:cytosol"/>
    <property type="evidence" value="ECO:0007669"/>
    <property type="project" value="TreeGrafter"/>
</dbReference>
<dbReference type="GO" id="GO:0048027">
    <property type="term" value="F:mRNA 5'-UTR binding"/>
    <property type="evidence" value="ECO:0007669"/>
    <property type="project" value="UniProtKB-UniRule"/>
</dbReference>
<dbReference type="GO" id="GO:0044781">
    <property type="term" value="P:bacterial-type flagellum organization"/>
    <property type="evidence" value="ECO:0007669"/>
    <property type="project" value="UniProtKB-KW"/>
</dbReference>
<dbReference type="GO" id="GO:0006402">
    <property type="term" value="P:mRNA catabolic process"/>
    <property type="evidence" value="ECO:0007669"/>
    <property type="project" value="InterPro"/>
</dbReference>
<dbReference type="GO" id="GO:0045947">
    <property type="term" value="P:negative regulation of translational initiation"/>
    <property type="evidence" value="ECO:0007669"/>
    <property type="project" value="UniProtKB-UniRule"/>
</dbReference>
<dbReference type="GO" id="GO:1902208">
    <property type="term" value="P:regulation of bacterial-type flagellum assembly"/>
    <property type="evidence" value="ECO:0007669"/>
    <property type="project" value="UniProtKB-UniRule"/>
</dbReference>
<dbReference type="GO" id="GO:0006109">
    <property type="term" value="P:regulation of carbohydrate metabolic process"/>
    <property type="evidence" value="ECO:0007669"/>
    <property type="project" value="InterPro"/>
</dbReference>
<dbReference type="FunFam" id="2.60.40.4380:FF:000002">
    <property type="entry name" value="Translational regulator CsrA"/>
    <property type="match status" value="1"/>
</dbReference>
<dbReference type="Gene3D" id="2.60.40.4380">
    <property type="entry name" value="Translational regulator CsrA"/>
    <property type="match status" value="1"/>
</dbReference>
<dbReference type="HAMAP" id="MF_00167">
    <property type="entry name" value="CsrA"/>
    <property type="match status" value="1"/>
</dbReference>
<dbReference type="InterPro" id="IPR003751">
    <property type="entry name" value="CsrA"/>
</dbReference>
<dbReference type="InterPro" id="IPR036107">
    <property type="entry name" value="CsrA_sf"/>
</dbReference>
<dbReference type="NCBIfam" id="TIGR00202">
    <property type="entry name" value="csrA"/>
    <property type="match status" value="1"/>
</dbReference>
<dbReference type="NCBIfam" id="NF002469">
    <property type="entry name" value="PRK01712.1"/>
    <property type="match status" value="1"/>
</dbReference>
<dbReference type="PANTHER" id="PTHR34984">
    <property type="entry name" value="CARBON STORAGE REGULATOR"/>
    <property type="match status" value="1"/>
</dbReference>
<dbReference type="PANTHER" id="PTHR34984:SF1">
    <property type="entry name" value="CARBON STORAGE REGULATOR"/>
    <property type="match status" value="1"/>
</dbReference>
<dbReference type="Pfam" id="PF02599">
    <property type="entry name" value="CsrA"/>
    <property type="match status" value="1"/>
</dbReference>
<dbReference type="SUPFAM" id="SSF117130">
    <property type="entry name" value="CsrA-like"/>
    <property type="match status" value="1"/>
</dbReference>
<name>CSRA_LEIXX</name>
<proteinExistence type="inferred from homology"/>
<sequence length="85" mass="9363">MLVLTRKQGEKILIGDDIEITVLDTRGDGIRIGISAPRGIRIQRDEVRKAIEAENRSAAMRNPAAEFELIASLTALQNAEDPPPR</sequence>
<reference key="1">
    <citation type="journal article" date="2004" name="Mol. Plant Microbe Interact.">
        <title>The genome sequence of the Gram-positive sugarcane pathogen Leifsonia xyli subsp. xyli.</title>
        <authorList>
            <person name="Monteiro-Vitorello C.B."/>
            <person name="Camargo L.E.A."/>
            <person name="Van Sluys M.A."/>
            <person name="Kitajima J.P."/>
            <person name="Truffi D."/>
            <person name="do Amaral A.M."/>
            <person name="Harakava R."/>
            <person name="de Oliveira J.C.F."/>
            <person name="Wood D."/>
            <person name="de Oliveira M.C."/>
            <person name="Miyaki C.Y."/>
            <person name="Takita M.A."/>
            <person name="da Silva A.C.R."/>
            <person name="Furlan L.R."/>
            <person name="Carraro D.M."/>
            <person name="Camarotte G."/>
            <person name="Almeida N.F. Jr."/>
            <person name="Carrer H."/>
            <person name="Coutinho L.L."/>
            <person name="El-Dorry H.A."/>
            <person name="Ferro M.I.T."/>
            <person name="Gagliardi P.R."/>
            <person name="Giglioti E."/>
            <person name="Goldman M.H.S."/>
            <person name="Goldman G.H."/>
            <person name="Kimura E.T."/>
            <person name="Ferro E.S."/>
            <person name="Kuramae E.E."/>
            <person name="Lemos E.G.M."/>
            <person name="Lemos M.V.F."/>
            <person name="Mauro S.M.Z."/>
            <person name="Machado M.A."/>
            <person name="Marino C.L."/>
            <person name="Menck C.F."/>
            <person name="Nunes L.R."/>
            <person name="Oliveira R.C."/>
            <person name="Pereira G.G."/>
            <person name="Siqueira W."/>
            <person name="de Souza A.A."/>
            <person name="Tsai S.M."/>
            <person name="Zanca A.S."/>
            <person name="Simpson A.J.G."/>
            <person name="Brumbley S.M."/>
            <person name="Setubal J.C."/>
        </authorList>
    </citation>
    <scope>NUCLEOTIDE SEQUENCE [LARGE SCALE GENOMIC DNA]</scope>
    <source>
        <strain>CTCB07</strain>
    </source>
</reference>
<organism>
    <name type="scientific">Leifsonia xyli subsp. xyli (strain CTCB07)</name>
    <dbReference type="NCBI Taxonomy" id="281090"/>
    <lineage>
        <taxon>Bacteria</taxon>
        <taxon>Bacillati</taxon>
        <taxon>Actinomycetota</taxon>
        <taxon>Actinomycetes</taxon>
        <taxon>Micrococcales</taxon>
        <taxon>Microbacteriaceae</taxon>
        <taxon>Leifsonia</taxon>
    </lineage>
</organism>
<feature type="chain" id="PRO_0000177072" description="Translational regulator CsrA">
    <location>
        <begin position="1"/>
        <end position="85"/>
    </location>
</feature>
<evidence type="ECO:0000255" key="1">
    <source>
        <dbReference type="HAMAP-Rule" id="MF_00167"/>
    </source>
</evidence>
<protein>
    <recommendedName>
        <fullName evidence="1">Translational regulator CsrA</fullName>
    </recommendedName>
</protein>
<accession>Q6AG99</accession>